<evidence type="ECO:0000255" key="1">
    <source>
        <dbReference type="PROSITE-ProRule" id="PRU00805"/>
    </source>
</evidence>
<evidence type="ECO:0000269" key="2">
    <source>
    </source>
</evidence>
<evidence type="ECO:0000303" key="3">
    <source>
    </source>
</evidence>
<evidence type="ECO:0000305" key="4"/>
<comment type="function">
    <text evidence="2">Proline hydroxylase; part of the gene cluster that mediates the biosynthesis of burnettramic acids, an unusual class of bolaamphiphilic pyrrolizidinediones that display potent antibacterial, antifungal, and cytotoxic activities (PubMed:30735051). The first step of the biosynthesis of burnettramic acids is the hydroxylation of proline by the proline hydroxylase buaE to generate 4-hydroxyproline (PubMed:30735051). The PKS-NRPS buaA and trans-enoyl reductase buaC construct the highly reduced polyketide chain, and the condensation (C) domain of buaA then catalyzes the amide bond formation with the activated 4-hydroxyproline (PubMed:30735051). This is followed by the R domain releasing the nascent polyketide-peptide directly via a Dieckmann condensation to afford a tetramic acid fused to the hydroxyproline, generating the bicyclic pyrrolidinedione moiety (PubMed:30735051). The cytochrome P450 monooxygenases buaD and buaG are likely responsible for the multiple hydroxylations on the polyketide chain and its terminus, although in the heterologous context, buaD does not appear to be required. Therefore, while buaG may be a multifunctional cytochrome P450 monooxygenase, it cannot be ruled out that the two secondary alcohols on the polyketide chain could have an acetate origin (PubMed:30735051). Finally, the glycosyltransferase buaB transfers beta-D-mannose to the aglycone burnettramic acid A to form burnettramic acid A (PubMed:30735051). Burnettramic acid B is a minor cis-pyrrolizidine epimer of burnettramic acid A and it is likely that small amounts of it form naturally in acidic environments (PubMed:30735051).</text>
</comment>
<comment type="cofactor">
    <cofactor evidence="1">
        <name>Fe(2+)</name>
        <dbReference type="ChEBI" id="CHEBI:29033"/>
    </cofactor>
    <text evidence="1">Binds 1 Fe(2+) ion per subunit.</text>
</comment>
<comment type="pathway">
    <text evidence="2">Mycotoxin biosynthesis.</text>
</comment>
<comment type="similarity">
    <text evidence="4">Belongs to the iron/ascorbate-dependent oxidoreductase family.</text>
</comment>
<gene>
    <name evidence="3" type="primary">buaE</name>
</gene>
<proteinExistence type="inferred from homology"/>
<sequence length="319" mass="36238">MEVERLDYTDFLNEAPGRQEAFVQHLYAALSRVGFAKITNHPIPESVILQLFAWTKGFFTLPLEHKRKAAHPPQPNPHRGWSCIGQEKLSVIAQGKAVLDLKESFDMGPGDDELYPNIWTDEGDLPGFRAFMEDFYGRCQSLHLQLLSAIARSMQLPDSYFAPLCSQNSSELRLNHYPAVSRHDLTTGTMRISSHTDFGTITLLFQDSVGGLEVEDQTRPGHYMPVAADDCTDIIVNVGDCLQRWTNDRLRSANHRVTLPRGLTHGMVDDRYSIAYFGKPSRDVSVRTLSALLRANEEAKYREEMTAWQYNQSRLLQTY</sequence>
<feature type="chain" id="PRO_0000448733" description="Proline hydroxylase buaE">
    <location>
        <begin position="1"/>
        <end position="319"/>
    </location>
</feature>
<feature type="domain" description="Fe2OG dioxygenase" evidence="1">
    <location>
        <begin position="168"/>
        <end position="280"/>
    </location>
</feature>
<feature type="binding site" evidence="1">
    <location>
        <position position="195"/>
    </location>
    <ligand>
        <name>Fe cation</name>
        <dbReference type="ChEBI" id="CHEBI:24875"/>
    </ligand>
</feature>
<feature type="binding site" evidence="1">
    <location>
        <position position="197"/>
    </location>
    <ligand>
        <name>Fe cation</name>
        <dbReference type="ChEBI" id="CHEBI:24875"/>
    </ligand>
</feature>
<feature type="binding site" evidence="1">
    <location>
        <position position="255"/>
    </location>
    <ligand>
        <name>Fe cation</name>
        <dbReference type="ChEBI" id="CHEBI:24875"/>
    </ligand>
</feature>
<feature type="binding site" evidence="1">
    <location>
        <position position="271"/>
    </location>
    <ligand>
        <name>2-oxoglutarate</name>
        <dbReference type="ChEBI" id="CHEBI:16810"/>
    </ligand>
</feature>
<accession>A0A411L030</accession>
<keyword id="KW-0045">Antibiotic biosynthesis</keyword>
<keyword id="KW-0223">Dioxygenase</keyword>
<keyword id="KW-0408">Iron</keyword>
<keyword id="KW-0479">Metal-binding</keyword>
<keyword id="KW-0560">Oxidoreductase</keyword>
<reference key="1">
    <citation type="journal article" date="2019" name="Org. Lett.">
        <title>Discovery and Heterologous Biosynthesis of the Burnettramic Acids: Rare PKS-NRPS-Derived Bolaamphiphilic Pyrrolizidinediones from an Australian Fungus, Aspergillus burnettii.</title>
        <authorList>
            <person name="Li H."/>
            <person name="Gilchrist C.L.M."/>
            <person name="Lacey H.J."/>
            <person name="Crombie A."/>
            <person name="Vuong D."/>
            <person name="Pitt J.I."/>
            <person name="Lacey E."/>
            <person name="Chooi Y.H."/>
            <person name="Piggott A.M."/>
        </authorList>
    </citation>
    <scope>NUCLEOTIDE SEQUENCE [GENOMIC DNA]</scope>
    <scope>FUNCTION</scope>
    <scope>PATHWAY</scope>
    <source>
        <strain>FRR 5400</strain>
    </source>
</reference>
<name>BUAE_PETAA</name>
<protein>
    <recommendedName>
        <fullName evidence="3">Proline hydroxylase buaE</fullName>
        <ecNumber evidence="1 2">1.14.11.-</ecNumber>
    </recommendedName>
    <alternativeName>
        <fullName>2-oxoglutarate-dependent dioxygenase buaE</fullName>
    </alternativeName>
    <alternativeName>
        <fullName evidence="3">Burnettramic acids biosynthesis cluster protein E</fullName>
    </alternativeName>
</protein>
<organism>
    <name type="scientific">Petromyces alliaceus</name>
    <name type="common">Aspergillus alliaceus</name>
    <dbReference type="NCBI Taxonomy" id="209559"/>
    <lineage>
        <taxon>Eukaryota</taxon>
        <taxon>Fungi</taxon>
        <taxon>Dikarya</taxon>
        <taxon>Ascomycota</taxon>
        <taxon>Pezizomycotina</taxon>
        <taxon>Eurotiomycetes</taxon>
        <taxon>Eurotiomycetidae</taxon>
        <taxon>Eurotiales</taxon>
        <taxon>Aspergillaceae</taxon>
        <taxon>Aspergillus</taxon>
        <taxon>Aspergillus subgen. Circumdati</taxon>
    </lineage>
</organism>
<dbReference type="EC" id="1.14.11.-" evidence="1 2"/>
<dbReference type="EMBL" id="MK425157">
    <property type="protein sequence ID" value="QBE85645.1"/>
    <property type="molecule type" value="Genomic_DNA"/>
</dbReference>
<dbReference type="SMR" id="A0A411L030"/>
<dbReference type="GO" id="GO:0051213">
    <property type="term" value="F:dioxygenase activity"/>
    <property type="evidence" value="ECO:0007669"/>
    <property type="project" value="UniProtKB-KW"/>
</dbReference>
<dbReference type="GO" id="GO:0046872">
    <property type="term" value="F:metal ion binding"/>
    <property type="evidence" value="ECO:0007669"/>
    <property type="project" value="UniProtKB-KW"/>
</dbReference>
<dbReference type="GO" id="GO:0017000">
    <property type="term" value="P:antibiotic biosynthetic process"/>
    <property type="evidence" value="ECO:0007669"/>
    <property type="project" value="UniProtKB-KW"/>
</dbReference>
<dbReference type="GO" id="GO:0044283">
    <property type="term" value="P:small molecule biosynthetic process"/>
    <property type="evidence" value="ECO:0007669"/>
    <property type="project" value="UniProtKB-ARBA"/>
</dbReference>
<dbReference type="Gene3D" id="2.60.120.330">
    <property type="entry name" value="B-lactam Antibiotic, Isopenicillin N Synthase, Chain"/>
    <property type="match status" value="1"/>
</dbReference>
<dbReference type="InterPro" id="IPR026992">
    <property type="entry name" value="DIOX_N"/>
</dbReference>
<dbReference type="InterPro" id="IPR044861">
    <property type="entry name" value="IPNS-like_FE2OG_OXY"/>
</dbReference>
<dbReference type="InterPro" id="IPR027443">
    <property type="entry name" value="IPNS-like_sf"/>
</dbReference>
<dbReference type="InterPro" id="IPR050231">
    <property type="entry name" value="Iron_ascorbate_oxido_reductase"/>
</dbReference>
<dbReference type="InterPro" id="IPR005123">
    <property type="entry name" value="Oxoglu/Fe-dep_dioxygenase_dom"/>
</dbReference>
<dbReference type="PANTHER" id="PTHR47990">
    <property type="entry name" value="2-OXOGLUTARATE (2OG) AND FE(II)-DEPENDENT OXYGENASE SUPERFAMILY PROTEIN-RELATED"/>
    <property type="match status" value="1"/>
</dbReference>
<dbReference type="Pfam" id="PF03171">
    <property type="entry name" value="2OG-FeII_Oxy"/>
    <property type="match status" value="1"/>
</dbReference>
<dbReference type="Pfam" id="PF14226">
    <property type="entry name" value="DIOX_N"/>
    <property type="match status" value="1"/>
</dbReference>
<dbReference type="SUPFAM" id="SSF51197">
    <property type="entry name" value="Clavaminate synthase-like"/>
    <property type="match status" value="1"/>
</dbReference>
<dbReference type="PROSITE" id="PS51471">
    <property type="entry name" value="FE2OG_OXY"/>
    <property type="match status" value="1"/>
</dbReference>